<sequence>METQRASLCLGRWSLWLLLLGLVVPSASAQALSYREAVLRAVDRLNEQSSEANLYRLLELDQPPKADEDPGTPKPVSFTVKETVCPRPTWRPPELCDFKENGRVKQCVGTVTLNPSNDPLDINCDEIQSVGRFRRLRKKTRKRLKKIGKVLKWIPPIVGSIPLGCG</sequence>
<comment type="function">
    <text>Exerts antimicrobial activity against both Gram-positive and negative bacteria. Its activity appears to be mediated by its ability to damage bacterial membranes.</text>
</comment>
<comment type="subcellular location">
    <subcellularLocation>
        <location>Secreted</location>
    </subcellularLocation>
</comment>
<comment type="similarity">
    <text evidence="3">Belongs to the cathelicidin family.</text>
</comment>
<protein>
    <recommendedName>
        <fullName>Antibacterial peptide PMAP-36</fullName>
    </recommendedName>
    <alternativeName>
        <fullName>Myeloid antibacterial peptide 36</fullName>
    </alternativeName>
</protein>
<evidence type="ECO:0000250" key="1"/>
<evidence type="ECO:0000255" key="2"/>
<evidence type="ECO:0000305" key="3"/>
<organism>
    <name type="scientific">Sus scrofa</name>
    <name type="common">Pig</name>
    <dbReference type="NCBI Taxonomy" id="9823"/>
    <lineage>
        <taxon>Eukaryota</taxon>
        <taxon>Metazoa</taxon>
        <taxon>Chordata</taxon>
        <taxon>Craniata</taxon>
        <taxon>Vertebrata</taxon>
        <taxon>Euteleostomi</taxon>
        <taxon>Mammalia</taxon>
        <taxon>Eutheria</taxon>
        <taxon>Laurasiatheria</taxon>
        <taxon>Artiodactyla</taxon>
        <taxon>Suina</taxon>
        <taxon>Suidae</taxon>
        <taxon>Sus</taxon>
    </lineage>
</organism>
<gene>
    <name type="primary">PMAP36</name>
</gene>
<accession>P49931</accession>
<feature type="signal peptide" evidence="2">
    <location>
        <begin position="1"/>
        <end position="29"/>
    </location>
</feature>
<feature type="propeptide" id="PRO_0000004734" evidence="2">
    <location>
        <begin position="30"/>
        <end position="129"/>
    </location>
</feature>
<feature type="peptide" id="PRO_0000004735" description="Antibacterial peptide PMAP-36">
    <location>
        <begin position="130"/>
        <end position="166"/>
    </location>
</feature>
<feature type="disulfide bond" evidence="1">
    <location>
        <begin position="85"/>
        <end position="96"/>
    </location>
</feature>
<feature type="disulfide bond" evidence="1">
    <location>
        <begin position="107"/>
        <end position="124"/>
    </location>
</feature>
<dbReference type="EMBL" id="L29125">
    <property type="protein sequence ID" value="AAA31070.1"/>
    <property type="molecule type" value="mRNA"/>
</dbReference>
<dbReference type="PIR" id="S41731">
    <property type="entry name" value="S41731"/>
</dbReference>
<dbReference type="RefSeq" id="NP_001123437.1">
    <property type="nucleotide sequence ID" value="NM_001129965.1"/>
</dbReference>
<dbReference type="SMR" id="P49931"/>
<dbReference type="FunCoup" id="P49931">
    <property type="interactions" value="165"/>
</dbReference>
<dbReference type="STRING" id="9823.ENSSSCP00000063210"/>
<dbReference type="PeptideAtlas" id="P49931"/>
<dbReference type="GeneID" id="100170124"/>
<dbReference type="KEGG" id="ssc:100170124"/>
<dbReference type="CTD" id="100170124"/>
<dbReference type="eggNOG" id="ENOG502SAES">
    <property type="taxonomic scope" value="Eukaryota"/>
</dbReference>
<dbReference type="InParanoid" id="P49931"/>
<dbReference type="OrthoDB" id="9930485at2759"/>
<dbReference type="Proteomes" id="UP000008227">
    <property type="component" value="Unplaced"/>
</dbReference>
<dbReference type="Proteomes" id="UP000314985">
    <property type="component" value="Unplaced"/>
</dbReference>
<dbReference type="Proteomes" id="UP000694570">
    <property type="component" value="Unplaced"/>
</dbReference>
<dbReference type="Proteomes" id="UP000694571">
    <property type="component" value="Unplaced"/>
</dbReference>
<dbReference type="Proteomes" id="UP000694720">
    <property type="component" value="Unplaced"/>
</dbReference>
<dbReference type="Proteomes" id="UP000694722">
    <property type="component" value="Unplaced"/>
</dbReference>
<dbReference type="Proteomes" id="UP000694723">
    <property type="component" value="Unplaced"/>
</dbReference>
<dbReference type="Proteomes" id="UP000694724">
    <property type="component" value="Unplaced"/>
</dbReference>
<dbReference type="Proteomes" id="UP000694725">
    <property type="component" value="Unplaced"/>
</dbReference>
<dbReference type="Proteomes" id="UP000694726">
    <property type="component" value="Unplaced"/>
</dbReference>
<dbReference type="Proteomes" id="UP000694727">
    <property type="component" value="Unplaced"/>
</dbReference>
<dbReference type="Proteomes" id="UP000694728">
    <property type="component" value="Unplaced"/>
</dbReference>
<dbReference type="GO" id="GO:0005615">
    <property type="term" value="C:extracellular space"/>
    <property type="evidence" value="ECO:0000318"/>
    <property type="project" value="GO_Central"/>
</dbReference>
<dbReference type="GO" id="GO:0001530">
    <property type="term" value="F:lipopolysaccharide binding"/>
    <property type="evidence" value="ECO:0000318"/>
    <property type="project" value="GO_Central"/>
</dbReference>
<dbReference type="GO" id="GO:0061844">
    <property type="term" value="P:antimicrobial humoral immune response mediated by antimicrobial peptide"/>
    <property type="evidence" value="ECO:0000318"/>
    <property type="project" value="GO_Central"/>
</dbReference>
<dbReference type="GO" id="GO:0050829">
    <property type="term" value="P:defense response to Gram-negative bacterium"/>
    <property type="evidence" value="ECO:0000318"/>
    <property type="project" value="GO_Central"/>
</dbReference>
<dbReference type="GO" id="GO:0050830">
    <property type="term" value="P:defense response to Gram-positive bacterium"/>
    <property type="evidence" value="ECO:0000318"/>
    <property type="project" value="GO_Central"/>
</dbReference>
<dbReference type="GO" id="GO:0045087">
    <property type="term" value="P:innate immune response"/>
    <property type="evidence" value="ECO:0000318"/>
    <property type="project" value="GO_Central"/>
</dbReference>
<dbReference type="FunFam" id="3.10.450.10:FF:000003">
    <property type="entry name" value="Cathelicidin antimicrobial peptide"/>
    <property type="match status" value="1"/>
</dbReference>
<dbReference type="Gene3D" id="3.10.450.10">
    <property type="match status" value="1"/>
</dbReference>
<dbReference type="InterPro" id="IPR001894">
    <property type="entry name" value="Cathelicidin-like"/>
</dbReference>
<dbReference type="InterPro" id="IPR018216">
    <property type="entry name" value="Cathelicidin_CS"/>
</dbReference>
<dbReference type="InterPro" id="IPR046350">
    <property type="entry name" value="Cystatin_sf"/>
</dbReference>
<dbReference type="PANTHER" id="PTHR10206">
    <property type="entry name" value="CATHELICIDIN"/>
    <property type="match status" value="1"/>
</dbReference>
<dbReference type="PANTHER" id="PTHR10206:SF2">
    <property type="entry name" value="CATHELICIDIN ANTIMICROBIAL PEPTIDE"/>
    <property type="match status" value="1"/>
</dbReference>
<dbReference type="Pfam" id="PF00666">
    <property type="entry name" value="Cathelicidins"/>
    <property type="match status" value="1"/>
</dbReference>
<dbReference type="SUPFAM" id="SSF54403">
    <property type="entry name" value="Cystatin/monellin"/>
    <property type="match status" value="1"/>
</dbReference>
<dbReference type="PROSITE" id="PS00946">
    <property type="entry name" value="CATHELICIDINS_1"/>
    <property type="match status" value="1"/>
</dbReference>
<dbReference type="PROSITE" id="PS00947">
    <property type="entry name" value="CATHELICIDINS_2"/>
    <property type="match status" value="1"/>
</dbReference>
<proteinExistence type="evidence at transcript level"/>
<name>PMP36_PIG</name>
<keyword id="KW-0044">Antibiotic</keyword>
<keyword id="KW-0929">Antimicrobial</keyword>
<keyword id="KW-1015">Disulfide bond</keyword>
<keyword id="KW-1185">Reference proteome</keyword>
<keyword id="KW-0964">Secreted</keyword>
<keyword id="KW-0732">Signal</keyword>
<reference key="1">
    <citation type="journal article" date="1994" name="FEBS Lett.">
        <title>Chemical synthesis and biological activity of a novel antibacterial peptide deduced from a pig myeloid cDNA.</title>
        <authorList>
            <person name="Storici P."/>
            <person name="Scocchi M."/>
            <person name="Tossi A."/>
            <person name="Gennaro R."/>
            <person name="Zanetti M."/>
        </authorList>
    </citation>
    <scope>NUCLEOTIDE SEQUENCE [MRNA]</scope>
    <scope>SYNTHESIS OF 130-166</scope>
    <source>
        <tissue>Bone marrow</tissue>
    </source>
</reference>